<protein>
    <recommendedName>
        <fullName evidence="1">Ion-translocating oxidoreductase complex subunit D</fullName>
        <ecNumber evidence="1">7.-.-.-</ecNumber>
    </recommendedName>
    <alternativeName>
        <fullName evidence="1">Rnf electron transport complex subunit D</fullName>
    </alternativeName>
</protein>
<evidence type="ECO:0000255" key="1">
    <source>
        <dbReference type="HAMAP-Rule" id="MF_00462"/>
    </source>
</evidence>
<keyword id="KW-0997">Cell inner membrane</keyword>
<keyword id="KW-1003">Cell membrane</keyword>
<keyword id="KW-0249">Electron transport</keyword>
<keyword id="KW-0285">Flavoprotein</keyword>
<keyword id="KW-0288">FMN</keyword>
<keyword id="KW-0472">Membrane</keyword>
<keyword id="KW-0597">Phosphoprotein</keyword>
<keyword id="KW-1185">Reference proteome</keyword>
<keyword id="KW-1278">Translocase</keyword>
<keyword id="KW-0812">Transmembrane</keyword>
<keyword id="KW-1133">Transmembrane helix</keyword>
<keyword id="KW-0813">Transport</keyword>
<organism>
    <name type="scientific">Psychromonas ingrahamii (strain DSM 17664 / CCUG 51855 / 37)</name>
    <dbReference type="NCBI Taxonomy" id="357804"/>
    <lineage>
        <taxon>Bacteria</taxon>
        <taxon>Pseudomonadati</taxon>
        <taxon>Pseudomonadota</taxon>
        <taxon>Gammaproteobacteria</taxon>
        <taxon>Alteromonadales</taxon>
        <taxon>Psychromonadaceae</taxon>
        <taxon>Psychromonas</taxon>
    </lineage>
</organism>
<accession>A1SSX2</accession>
<gene>
    <name evidence="1" type="primary">rnfD</name>
    <name type="ordered locus">Ping_0735</name>
</gene>
<proteinExistence type="inferred from homology"/>
<name>RNFD_PSYIN</name>
<dbReference type="EC" id="7.-.-.-" evidence="1"/>
<dbReference type="EMBL" id="CP000510">
    <property type="protein sequence ID" value="ABM02587.1"/>
    <property type="molecule type" value="Genomic_DNA"/>
</dbReference>
<dbReference type="RefSeq" id="WP_011769146.1">
    <property type="nucleotide sequence ID" value="NC_008709.1"/>
</dbReference>
<dbReference type="SMR" id="A1SSX2"/>
<dbReference type="STRING" id="357804.Ping_0735"/>
<dbReference type="KEGG" id="pin:Ping_0735"/>
<dbReference type="eggNOG" id="COG4658">
    <property type="taxonomic scope" value="Bacteria"/>
</dbReference>
<dbReference type="HOGENOM" id="CLU_042020_0_0_6"/>
<dbReference type="OrthoDB" id="9776359at2"/>
<dbReference type="Proteomes" id="UP000000639">
    <property type="component" value="Chromosome"/>
</dbReference>
<dbReference type="GO" id="GO:0005886">
    <property type="term" value="C:plasma membrane"/>
    <property type="evidence" value="ECO:0007669"/>
    <property type="project" value="UniProtKB-SubCell"/>
</dbReference>
<dbReference type="GO" id="GO:0022900">
    <property type="term" value="P:electron transport chain"/>
    <property type="evidence" value="ECO:0007669"/>
    <property type="project" value="UniProtKB-UniRule"/>
</dbReference>
<dbReference type="GO" id="GO:0055085">
    <property type="term" value="P:transmembrane transport"/>
    <property type="evidence" value="ECO:0007669"/>
    <property type="project" value="InterPro"/>
</dbReference>
<dbReference type="HAMAP" id="MF_00462">
    <property type="entry name" value="RsxD_RnfD"/>
    <property type="match status" value="1"/>
</dbReference>
<dbReference type="InterPro" id="IPR004338">
    <property type="entry name" value="NqrB/RnfD"/>
</dbReference>
<dbReference type="InterPro" id="IPR011303">
    <property type="entry name" value="RnfD_bac"/>
</dbReference>
<dbReference type="NCBIfam" id="NF002011">
    <property type="entry name" value="PRK00816.1"/>
    <property type="match status" value="1"/>
</dbReference>
<dbReference type="NCBIfam" id="TIGR01946">
    <property type="entry name" value="rnfD"/>
    <property type="match status" value="1"/>
</dbReference>
<dbReference type="PANTHER" id="PTHR30578">
    <property type="entry name" value="ELECTRON TRANSPORT COMPLEX PROTEIN RNFD"/>
    <property type="match status" value="1"/>
</dbReference>
<dbReference type="PANTHER" id="PTHR30578:SF0">
    <property type="entry name" value="ION-TRANSLOCATING OXIDOREDUCTASE COMPLEX SUBUNIT D"/>
    <property type="match status" value="1"/>
</dbReference>
<dbReference type="Pfam" id="PF03116">
    <property type="entry name" value="NQR2_RnfD_RnfE"/>
    <property type="match status" value="1"/>
</dbReference>
<sequence length="350" mass="38298">MAYKNASSPHQKQRRTTSQVMVLVILCLIPGVFLQSYFFGYANLIQISLACLAALASEAFILKIRNRPVLNTLKDASALLTAILLAISIPPLAPWWIVVIGTIFAIIFVKQIYGGLGQNIFNPAMAGYVLLLISFPVQMTSWLPVQSLQPFSLTLMDQINAIFTGSTLDGYSVAQLSVSIDGLSMATPLNTVRDALHNGFTVTEIFNSVQFKASSWQQIYWINGAFLAGGLILLFKRIVHWHIPMSFLLGIGIFSFIAFAYSPDLNAPPLFHLFSGATMLGAFFILSDPVSASTTVKGRILYALLIAFIVVIIRNVGGYPDAVAFAVLLGNMCVPLIDYYTQPKVYGGRK</sequence>
<reference key="1">
    <citation type="journal article" date="2008" name="BMC Genomics">
        <title>Genomics of an extreme psychrophile, Psychromonas ingrahamii.</title>
        <authorList>
            <person name="Riley M."/>
            <person name="Staley J.T."/>
            <person name="Danchin A."/>
            <person name="Wang T.Z."/>
            <person name="Brettin T.S."/>
            <person name="Hauser L.J."/>
            <person name="Land M.L."/>
            <person name="Thompson L.S."/>
        </authorList>
    </citation>
    <scope>NUCLEOTIDE SEQUENCE [LARGE SCALE GENOMIC DNA]</scope>
    <source>
        <strain>DSM 17664 / CCUG 51855 / 37</strain>
    </source>
</reference>
<comment type="function">
    <text evidence="1">Part of a membrane-bound complex that couples electron transfer with translocation of ions across the membrane.</text>
</comment>
<comment type="cofactor">
    <cofactor evidence="1">
        <name>FMN</name>
        <dbReference type="ChEBI" id="CHEBI:58210"/>
    </cofactor>
</comment>
<comment type="subunit">
    <text evidence="1">The complex is composed of six subunits: RnfA, RnfB, RnfC, RnfD, RnfE and RnfG.</text>
</comment>
<comment type="subcellular location">
    <subcellularLocation>
        <location evidence="1">Cell inner membrane</location>
        <topology evidence="1">Multi-pass membrane protein</topology>
    </subcellularLocation>
</comment>
<comment type="similarity">
    <text evidence="1">Belongs to the NqrB/RnfD family.</text>
</comment>
<feature type="chain" id="PRO_0000298235" description="Ion-translocating oxidoreductase complex subunit D">
    <location>
        <begin position="1"/>
        <end position="350"/>
    </location>
</feature>
<feature type="transmembrane region" description="Helical" evidence="1">
    <location>
        <begin position="20"/>
        <end position="40"/>
    </location>
</feature>
<feature type="transmembrane region" description="Helical" evidence="1">
    <location>
        <begin position="44"/>
        <end position="64"/>
    </location>
</feature>
<feature type="transmembrane region" description="Helical" evidence="1">
    <location>
        <begin position="68"/>
        <end position="88"/>
    </location>
</feature>
<feature type="transmembrane region" description="Helical" evidence="1">
    <location>
        <begin position="89"/>
        <end position="109"/>
    </location>
</feature>
<feature type="transmembrane region" description="Helical" evidence="1">
    <location>
        <begin position="125"/>
        <end position="145"/>
    </location>
</feature>
<feature type="transmembrane region" description="Helical" evidence="1">
    <location>
        <begin position="215"/>
        <end position="235"/>
    </location>
</feature>
<feature type="transmembrane region" description="Helical" evidence="1">
    <location>
        <begin position="241"/>
        <end position="261"/>
    </location>
</feature>
<feature type="transmembrane region" description="Helical" evidence="1">
    <location>
        <begin position="267"/>
        <end position="287"/>
    </location>
</feature>
<feature type="transmembrane region" description="Helical" evidence="1">
    <location>
        <begin position="300"/>
        <end position="320"/>
    </location>
</feature>
<feature type="transmembrane region" description="Helical" evidence="1">
    <location>
        <begin position="322"/>
        <end position="342"/>
    </location>
</feature>
<feature type="modified residue" description="FMN phosphoryl threonine" evidence="1">
    <location>
        <position position="187"/>
    </location>
</feature>